<protein>
    <recommendedName>
        <fullName evidence="1">Glutamate 5-kinase</fullName>
        <ecNumber evidence="1">2.7.2.11</ecNumber>
    </recommendedName>
    <alternativeName>
        <fullName evidence="1">Gamma-glutamyl kinase</fullName>
        <shortName evidence="1">GK</shortName>
    </alternativeName>
</protein>
<reference key="1">
    <citation type="journal article" date="2003" name="Appl. Microbiol. Biotechnol.">
        <title>The Corynebacterium glutamicum genome: features and impacts on biotechnological processes.</title>
        <authorList>
            <person name="Ikeda M."/>
            <person name="Nakagawa S."/>
        </authorList>
    </citation>
    <scope>NUCLEOTIDE SEQUENCE [LARGE SCALE GENOMIC DNA]</scope>
    <source>
        <strain>ATCC 13032 / DSM 20300 / JCM 1318 / BCRC 11384 / CCUG 27702 / LMG 3730 / NBRC 12168 / NCIMB 10025 / NRRL B-2784 / 534</strain>
    </source>
</reference>
<reference key="2">
    <citation type="journal article" date="2003" name="J. Biotechnol.">
        <title>The complete Corynebacterium glutamicum ATCC 13032 genome sequence and its impact on the production of L-aspartate-derived amino acids and vitamins.</title>
        <authorList>
            <person name="Kalinowski J."/>
            <person name="Bathe B."/>
            <person name="Bartels D."/>
            <person name="Bischoff N."/>
            <person name="Bott M."/>
            <person name="Burkovski A."/>
            <person name="Dusch N."/>
            <person name="Eggeling L."/>
            <person name="Eikmanns B.J."/>
            <person name="Gaigalat L."/>
            <person name="Goesmann A."/>
            <person name="Hartmann M."/>
            <person name="Huthmacher K."/>
            <person name="Kraemer R."/>
            <person name="Linke B."/>
            <person name="McHardy A.C."/>
            <person name="Meyer F."/>
            <person name="Moeckel B."/>
            <person name="Pfefferle W."/>
            <person name="Puehler A."/>
            <person name="Rey D.A."/>
            <person name="Rueckert C."/>
            <person name="Rupp O."/>
            <person name="Sahm H."/>
            <person name="Wendisch V.F."/>
            <person name="Wiegraebe I."/>
            <person name="Tauch A."/>
        </authorList>
    </citation>
    <scope>NUCLEOTIDE SEQUENCE [LARGE SCALE GENOMIC DNA]</scope>
    <source>
        <strain>ATCC 13032 / DSM 20300 / JCM 1318 / BCRC 11384 / CCUG 27702 / LMG 3730 / NBRC 12168 / NCIMB 10025 / NRRL B-2784 / 534</strain>
    </source>
</reference>
<organism>
    <name type="scientific">Corynebacterium glutamicum (strain ATCC 13032 / DSM 20300 / JCM 1318 / BCRC 11384 / CCUG 27702 / LMG 3730 / NBRC 12168 / NCIMB 10025 / NRRL B-2784 / 534)</name>
    <dbReference type="NCBI Taxonomy" id="196627"/>
    <lineage>
        <taxon>Bacteria</taxon>
        <taxon>Bacillati</taxon>
        <taxon>Actinomycetota</taxon>
        <taxon>Actinomycetes</taxon>
        <taxon>Mycobacteriales</taxon>
        <taxon>Corynebacteriaceae</taxon>
        <taxon>Corynebacterium</taxon>
    </lineage>
</organism>
<evidence type="ECO:0000255" key="1">
    <source>
        <dbReference type="HAMAP-Rule" id="MF_00456"/>
    </source>
</evidence>
<evidence type="ECO:0000305" key="2"/>
<sequence length="369" mass="38626">MRERISNAKRVVVKIGSSSLTNDEDGHTVDPNRINTIVNALQARMEAGSDLIVVSSGAVAAGMAPLGLSTRPTELAVKQAAAAVGQVHLMHQWGRSFARYGRPIGQVLLTAADAGKRDRARNAQRTIDKLRILGAVPIVNENDTVATTGVNFGDNDRLAAIVAHLVSADALVLLSDVDGLFDKNPTDPTAKFISEVRDGNDLKGVIAGDGGKVGTGGMASKVSAARLASRSGVPVLLTSAANIGPALEDAQVGTVFHPKDNRLSAWKFWALYAADTAGKIRLDDGAVEAVTSGGKSLLAVGITEIIGDFQQGEIVEILGPAGQIIGRGEVSYDSDTLQSMVGMQTQDLPDGMQRPVVHADYLSNYASRA</sequence>
<feature type="chain" id="PRO_0000109665" description="Glutamate 5-kinase">
    <location>
        <begin position="1"/>
        <end position="369"/>
    </location>
</feature>
<feature type="domain" description="PUA" evidence="1">
    <location>
        <begin position="277"/>
        <end position="351"/>
    </location>
</feature>
<feature type="binding site" evidence="1">
    <location>
        <position position="14"/>
    </location>
    <ligand>
        <name>ATP</name>
        <dbReference type="ChEBI" id="CHEBI:30616"/>
    </ligand>
</feature>
<feature type="binding site" evidence="1">
    <location>
        <position position="56"/>
    </location>
    <ligand>
        <name>substrate</name>
    </ligand>
</feature>
<feature type="binding site" evidence="1">
    <location>
        <position position="143"/>
    </location>
    <ligand>
        <name>substrate</name>
    </ligand>
</feature>
<feature type="binding site" evidence="1">
    <location>
        <position position="155"/>
    </location>
    <ligand>
        <name>substrate</name>
    </ligand>
</feature>
<feature type="binding site" evidence="1">
    <location>
        <begin position="175"/>
        <end position="176"/>
    </location>
    <ligand>
        <name>ATP</name>
        <dbReference type="ChEBI" id="CHEBI:30616"/>
    </ligand>
</feature>
<feature type="binding site" evidence="1">
    <location>
        <begin position="215"/>
        <end position="221"/>
    </location>
    <ligand>
        <name>ATP</name>
        <dbReference type="ChEBI" id="CHEBI:30616"/>
    </ligand>
</feature>
<keyword id="KW-0028">Amino-acid biosynthesis</keyword>
<keyword id="KW-0067">ATP-binding</keyword>
<keyword id="KW-0963">Cytoplasm</keyword>
<keyword id="KW-0418">Kinase</keyword>
<keyword id="KW-0547">Nucleotide-binding</keyword>
<keyword id="KW-0641">Proline biosynthesis</keyword>
<keyword id="KW-1185">Reference proteome</keyword>
<keyword id="KW-0808">Transferase</keyword>
<proteinExistence type="inferred from homology"/>
<dbReference type="EC" id="2.7.2.11" evidence="1"/>
<dbReference type="EMBL" id="BA000036">
    <property type="protein sequence ID" value="BAB99749.1"/>
    <property type="molecule type" value="Genomic_DNA"/>
</dbReference>
<dbReference type="EMBL" id="BX927155">
    <property type="protein sequence ID" value="CAF21021.1"/>
    <property type="status" value="ALT_INIT"/>
    <property type="molecule type" value="Genomic_DNA"/>
</dbReference>
<dbReference type="RefSeq" id="NP_601557.2">
    <property type="nucleotide sequence ID" value="NC_003450.3"/>
</dbReference>
<dbReference type="RefSeq" id="WP_011015063.1">
    <property type="nucleotide sequence ID" value="NC_006958.1"/>
</dbReference>
<dbReference type="SMR" id="P0C1E2"/>
<dbReference type="STRING" id="196627.cg2588"/>
<dbReference type="GeneID" id="1020307"/>
<dbReference type="KEGG" id="cgb:cg2588"/>
<dbReference type="KEGG" id="cgl:Cgl2356"/>
<dbReference type="PATRIC" id="fig|196627.13.peg.2292"/>
<dbReference type="eggNOG" id="COG0263">
    <property type="taxonomic scope" value="Bacteria"/>
</dbReference>
<dbReference type="HOGENOM" id="CLU_025400_2_0_11"/>
<dbReference type="OrthoDB" id="9804434at2"/>
<dbReference type="BioCyc" id="CORYNE:G18NG-11953-MONOMER"/>
<dbReference type="UniPathway" id="UPA00098">
    <property type="reaction ID" value="UER00359"/>
</dbReference>
<dbReference type="Proteomes" id="UP000000582">
    <property type="component" value="Chromosome"/>
</dbReference>
<dbReference type="Proteomes" id="UP000001009">
    <property type="component" value="Chromosome"/>
</dbReference>
<dbReference type="GO" id="GO:0005829">
    <property type="term" value="C:cytosol"/>
    <property type="evidence" value="ECO:0007669"/>
    <property type="project" value="TreeGrafter"/>
</dbReference>
<dbReference type="GO" id="GO:0005524">
    <property type="term" value="F:ATP binding"/>
    <property type="evidence" value="ECO:0007669"/>
    <property type="project" value="UniProtKB-KW"/>
</dbReference>
<dbReference type="GO" id="GO:0004349">
    <property type="term" value="F:glutamate 5-kinase activity"/>
    <property type="evidence" value="ECO:0007669"/>
    <property type="project" value="UniProtKB-UniRule"/>
</dbReference>
<dbReference type="GO" id="GO:0003723">
    <property type="term" value="F:RNA binding"/>
    <property type="evidence" value="ECO:0007669"/>
    <property type="project" value="InterPro"/>
</dbReference>
<dbReference type="GO" id="GO:0055129">
    <property type="term" value="P:L-proline biosynthetic process"/>
    <property type="evidence" value="ECO:0007669"/>
    <property type="project" value="UniProtKB-UniRule"/>
</dbReference>
<dbReference type="CDD" id="cd04242">
    <property type="entry name" value="AAK_G5K_ProB"/>
    <property type="match status" value="1"/>
</dbReference>
<dbReference type="CDD" id="cd21157">
    <property type="entry name" value="PUA_G5K"/>
    <property type="match status" value="1"/>
</dbReference>
<dbReference type="FunFam" id="3.40.1160.10:FF:000018">
    <property type="entry name" value="Glutamate 5-kinase"/>
    <property type="match status" value="1"/>
</dbReference>
<dbReference type="Gene3D" id="3.40.1160.10">
    <property type="entry name" value="Acetylglutamate kinase-like"/>
    <property type="match status" value="1"/>
</dbReference>
<dbReference type="Gene3D" id="2.30.130.10">
    <property type="entry name" value="PUA domain"/>
    <property type="match status" value="1"/>
</dbReference>
<dbReference type="HAMAP" id="MF_00456">
    <property type="entry name" value="ProB"/>
    <property type="match status" value="1"/>
</dbReference>
<dbReference type="InterPro" id="IPR036393">
    <property type="entry name" value="AceGlu_kinase-like_sf"/>
</dbReference>
<dbReference type="InterPro" id="IPR001048">
    <property type="entry name" value="Asp/Glu/Uridylate_kinase"/>
</dbReference>
<dbReference type="InterPro" id="IPR041739">
    <property type="entry name" value="G5K_ProB"/>
</dbReference>
<dbReference type="InterPro" id="IPR001057">
    <property type="entry name" value="Glu/AcGlu_kinase"/>
</dbReference>
<dbReference type="InterPro" id="IPR011529">
    <property type="entry name" value="Glu_5kinase"/>
</dbReference>
<dbReference type="InterPro" id="IPR005715">
    <property type="entry name" value="Glu_5kinase/COase_Synthase"/>
</dbReference>
<dbReference type="InterPro" id="IPR019797">
    <property type="entry name" value="Glutamate_5-kinase_CS"/>
</dbReference>
<dbReference type="InterPro" id="IPR002478">
    <property type="entry name" value="PUA"/>
</dbReference>
<dbReference type="InterPro" id="IPR015947">
    <property type="entry name" value="PUA-like_sf"/>
</dbReference>
<dbReference type="InterPro" id="IPR036974">
    <property type="entry name" value="PUA_sf"/>
</dbReference>
<dbReference type="NCBIfam" id="TIGR01027">
    <property type="entry name" value="proB"/>
    <property type="match status" value="1"/>
</dbReference>
<dbReference type="PANTHER" id="PTHR43654">
    <property type="entry name" value="GLUTAMATE 5-KINASE"/>
    <property type="match status" value="1"/>
</dbReference>
<dbReference type="PANTHER" id="PTHR43654:SF1">
    <property type="entry name" value="ISOPENTENYL PHOSPHATE KINASE"/>
    <property type="match status" value="1"/>
</dbReference>
<dbReference type="Pfam" id="PF00696">
    <property type="entry name" value="AA_kinase"/>
    <property type="match status" value="1"/>
</dbReference>
<dbReference type="Pfam" id="PF01472">
    <property type="entry name" value="PUA"/>
    <property type="match status" value="1"/>
</dbReference>
<dbReference type="PIRSF" id="PIRSF000729">
    <property type="entry name" value="GK"/>
    <property type="match status" value="1"/>
</dbReference>
<dbReference type="PRINTS" id="PR00474">
    <property type="entry name" value="GLU5KINASE"/>
</dbReference>
<dbReference type="SMART" id="SM00359">
    <property type="entry name" value="PUA"/>
    <property type="match status" value="1"/>
</dbReference>
<dbReference type="SUPFAM" id="SSF53633">
    <property type="entry name" value="Carbamate kinase-like"/>
    <property type="match status" value="1"/>
</dbReference>
<dbReference type="SUPFAM" id="SSF88697">
    <property type="entry name" value="PUA domain-like"/>
    <property type="match status" value="1"/>
</dbReference>
<dbReference type="PROSITE" id="PS00902">
    <property type="entry name" value="GLUTAMATE_5_KINASE"/>
    <property type="match status" value="1"/>
</dbReference>
<dbReference type="PROSITE" id="PS50890">
    <property type="entry name" value="PUA"/>
    <property type="match status" value="1"/>
</dbReference>
<accession>P0C1E2</accession>
<accession>P46546</accession>
<gene>
    <name evidence="1" type="primary">proB</name>
    <name type="ordered locus">Cgl2356</name>
    <name type="ordered locus">cg2588</name>
</gene>
<name>PROB_CORGL</name>
<comment type="function">
    <text evidence="1">Catalyzes the transfer of a phosphate group to glutamate to form L-glutamate 5-phosphate.</text>
</comment>
<comment type="catalytic activity">
    <reaction evidence="1">
        <text>L-glutamate + ATP = L-glutamyl 5-phosphate + ADP</text>
        <dbReference type="Rhea" id="RHEA:14877"/>
        <dbReference type="ChEBI" id="CHEBI:29985"/>
        <dbReference type="ChEBI" id="CHEBI:30616"/>
        <dbReference type="ChEBI" id="CHEBI:58274"/>
        <dbReference type="ChEBI" id="CHEBI:456216"/>
        <dbReference type="EC" id="2.7.2.11"/>
    </reaction>
</comment>
<comment type="pathway">
    <text evidence="1">Amino-acid biosynthesis; L-proline biosynthesis; L-glutamate 5-semialdehyde from L-glutamate: step 1/2.</text>
</comment>
<comment type="subcellular location">
    <subcellularLocation>
        <location evidence="1">Cytoplasm</location>
    </subcellularLocation>
</comment>
<comment type="similarity">
    <text evidence="1">Belongs to the glutamate 5-kinase family.</text>
</comment>
<comment type="sequence caution" evidence="2">
    <conflict type="erroneous initiation">
        <sequence resource="EMBL-CDS" id="CAF21021"/>
    </conflict>
</comment>